<proteinExistence type="evidence at transcript level"/>
<sequence>MSPCGRARRQTSRGAMAVLAWKFPRTRLPMGASALCVVVLCWLYIFPVYRLPNEKEIVQGVLQQGTAWRRNQTAARAFRKQMEDCCDPAHLFAMTKMNSPMGKSMWYDGEFLYSFTIDNSTYSLFPQATPFQLPLKKCAVVGNGGILKKSGCGRQIDEANFVMRCNLPPLSSEYTKDVGSKSQLVTANPSIIRQRFQNLLWSRKTFVDNMKIYNHSYIYMPAFSMKTGTEPSLRVYYTLSDVGANQTVLFANPNFLRSIGKFWKSRGIHAKRLSTGLFLVSAALGLCEEVAIYGFWPFSVNMHEQPISHHYYDNVLPFSGFHAMPEEFLQLWYLHKIGALRMQLERCEDTSLQPTS</sequence>
<name>SIA8A_PANTR</name>
<protein>
    <recommendedName>
        <fullName evidence="2">Alpha-N-acetylneuraminide alpha-2,8-sialyltransferase</fullName>
        <ecNumber evidence="2">2.4.3.8</ecNumber>
    </recommendedName>
    <alternativeName>
        <fullName>Alpha-2,8-sialyltransferase 8A</fullName>
    </alternativeName>
    <alternativeName>
        <fullName>Ganglioside GD3 synthase</fullName>
    </alternativeName>
    <alternativeName>
        <fullName>Ganglioside GT3 synthase</fullName>
    </alternativeName>
    <alternativeName>
        <fullName>Sialyltransferase 8A</fullName>
        <shortName>SIAT8-A</shortName>
    </alternativeName>
    <alternativeName>
        <fullName>Sialyltransferase St8Sia I</fullName>
        <shortName>ST8SiaI</shortName>
    </alternativeName>
</protein>
<organism>
    <name type="scientific">Pan troglodytes</name>
    <name type="common">Chimpanzee</name>
    <dbReference type="NCBI Taxonomy" id="9598"/>
    <lineage>
        <taxon>Eukaryota</taxon>
        <taxon>Metazoa</taxon>
        <taxon>Chordata</taxon>
        <taxon>Craniata</taxon>
        <taxon>Vertebrata</taxon>
        <taxon>Euteleostomi</taxon>
        <taxon>Mammalia</taxon>
        <taxon>Eutheria</taxon>
        <taxon>Euarchontoglires</taxon>
        <taxon>Primates</taxon>
        <taxon>Haplorrhini</taxon>
        <taxon>Catarrhini</taxon>
        <taxon>Hominidae</taxon>
        <taxon>Pan</taxon>
    </lineage>
</organism>
<feature type="chain" id="PRO_0000149284" description="Alpha-N-acetylneuraminide alpha-2,8-sialyltransferase">
    <location>
        <begin position="1"/>
        <end position="356"/>
    </location>
</feature>
<feature type="topological domain" description="Cytoplasmic" evidence="3">
    <location>
        <begin position="1"/>
        <end position="29"/>
    </location>
</feature>
<feature type="transmembrane region" description="Helical; Signal-anchor for type II membrane protein" evidence="3">
    <location>
        <begin position="30"/>
        <end position="48"/>
    </location>
</feature>
<feature type="topological domain" description="Lumenal" evidence="3">
    <location>
        <begin position="49"/>
        <end position="356"/>
    </location>
</feature>
<feature type="active site" description="Proton donor/acceptor" evidence="1">
    <location>
        <position position="322"/>
    </location>
</feature>
<feature type="binding site" evidence="1">
    <location>
        <position position="143"/>
    </location>
    <ligand>
        <name>CMP-N-acetyl-beta-neuraminate</name>
        <dbReference type="ChEBI" id="CHEBI:57812"/>
    </ligand>
</feature>
<feature type="binding site" evidence="1">
    <location>
        <position position="166"/>
    </location>
    <ligand>
        <name>CMP-N-acetyl-beta-neuraminate</name>
        <dbReference type="ChEBI" id="CHEBI:57812"/>
    </ligand>
</feature>
<feature type="binding site" evidence="1">
    <location>
        <position position="274"/>
    </location>
    <ligand>
        <name>CMP-N-acetyl-beta-neuraminate</name>
        <dbReference type="ChEBI" id="CHEBI:57812"/>
    </ligand>
</feature>
<feature type="binding site" evidence="1">
    <location>
        <position position="275"/>
    </location>
    <ligand>
        <name>CMP-N-acetyl-beta-neuraminate</name>
        <dbReference type="ChEBI" id="CHEBI:57812"/>
    </ligand>
</feature>
<feature type="binding site" evidence="1">
    <location>
        <position position="276"/>
    </location>
    <ligand>
        <name>CMP-N-acetyl-beta-neuraminate</name>
        <dbReference type="ChEBI" id="CHEBI:57812"/>
    </ligand>
</feature>
<feature type="binding site" evidence="1">
    <location>
        <position position="296"/>
    </location>
    <ligand>
        <name>CMP-N-acetyl-beta-neuraminate</name>
        <dbReference type="ChEBI" id="CHEBI:57812"/>
    </ligand>
</feature>
<feature type="binding site" evidence="1">
    <location>
        <position position="310"/>
    </location>
    <ligand>
        <name>CMP-N-acetyl-beta-neuraminate</name>
        <dbReference type="ChEBI" id="CHEBI:57812"/>
    </ligand>
</feature>
<feature type="glycosylation site" description="N-linked (GlcNAc...) asparagine" evidence="3">
    <location>
        <position position="71"/>
    </location>
</feature>
<feature type="glycosylation site" description="N-linked (GlcNAc...) asparagine" evidence="3">
    <location>
        <position position="119"/>
    </location>
</feature>
<feature type="glycosylation site" description="N-linked (GlcNAc...) asparagine" evidence="3">
    <location>
        <position position="214"/>
    </location>
</feature>
<feature type="glycosylation site" description="N-linked (GlcNAc...) asparagine" evidence="3">
    <location>
        <position position="245"/>
    </location>
</feature>
<feature type="disulfide bond" evidence="1">
    <location>
        <begin position="138"/>
        <end position="287"/>
    </location>
</feature>
<feature type="disulfide bond" evidence="1">
    <location>
        <begin position="152"/>
        <end position="347"/>
    </location>
</feature>
<reference key="1">
    <citation type="journal article" date="2005" name="Glycobiology">
        <title>The animal sialyltransferases and sialyltransferase-related genes: a phylogenetic approach.</title>
        <authorList>
            <person name="Harduin-Lepers A."/>
            <person name="Mollicone R."/>
            <person name="Delannoy P."/>
            <person name="Oriol R."/>
        </authorList>
    </citation>
    <scope>NUCLEOTIDE SEQUENCE [MRNA]</scope>
</reference>
<gene>
    <name evidence="2" type="primary">ST8SIA1</name>
    <name type="synonym">SIAT8A</name>
</gene>
<comment type="function">
    <text evidence="2">Catalyzes the addition of sialic acid in alpha 2,8-linkage to the sialic acid moiety of the ganglioside GM3 to form ganglioside GD3; gangliosides are a subfamily of complex glycosphingolipds that contain one or more residues of sialic acid (By similarity). Can catalyze the addition of a second alpha-2,8- sialic acid to GD3 to form GT3 (By similarity). Can use GM1b, GD1a and GT1b as acceptor substrates to synthesize GD1c, GT1a and GQ1b respectively (By similarity).</text>
</comment>
<comment type="catalytic activity">
    <reaction evidence="2">
        <text>an N-acetyl-alpha-neuraminyl-(2-&gt;3)-beta-D-galactosyl derivative + CMP-N-acetyl-beta-neuraminate = an N-acetyl-alpha-neuraminyl-(2-&gt;8)-N-acetyl-alpha-neuraminyl-(2-&gt;3)-beta-D-galactosyl derivative + CMP + H(+)</text>
        <dbReference type="Rhea" id="RHEA:19313"/>
        <dbReference type="ChEBI" id="CHEBI:15378"/>
        <dbReference type="ChEBI" id="CHEBI:57812"/>
        <dbReference type="ChEBI" id="CHEBI:60377"/>
        <dbReference type="ChEBI" id="CHEBI:140308"/>
        <dbReference type="ChEBI" id="CHEBI:140309"/>
        <dbReference type="EC" id="2.4.3.8"/>
    </reaction>
</comment>
<comment type="catalytic activity">
    <reaction evidence="2">
        <text>a ganglioside GM3 (d18:1(4E)) + CMP-N-acetyl-beta-neuraminate = a ganglioside GD3 (d18:1(4E)) + CMP + H(+)</text>
        <dbReference type="Rhea" id="RHEA:41760"/>
        <dbReference type="ChEBI" id="CHEBI:15378"/>
        <dbReference type="ChEBI" id="CHEBI:57812"/>
        <dbReference type="ChEBI" id="CHEBI:60065"/>
        <dbReference type="ChEBI" id="CHEBI:60377"/>
        <dbReference type="ChEBI" id="CHEBI:78436"/>
    </reaction>
    <physiologicalReaction direction="left-to-right" evidence="2">
        <dbReference type="Rhea" id="RHEA:41761"/>
    </physiologicalReaction>
</comment>
<comment type="catalytic activity">
    <reaction evidence="2">
        <text>a ganglioside GD3 (d18:1(4E)) + CMP-N-acetyl-beta-neuraminate = a ganglioside GT3 (d18:1(4E)) + CMP + H(+)</text>
        <dbReference type="Rhea" id="RHEA:41764"/>
        <dbReference type="ChEBI" id="CHEBI:15378"/>
        <dbReference type="ChEBI" id="CHEBI:57812"/>
        <dbReference type="ChEBI" id="CHEBI:60377"/>
        <dbReference type="ChEBI" id="CHEBI:78436"/>
        <dbReference type="ChEBI" id="CHEBI:78438"/>
    </reaction>
    <physiologicalReaction direction="left-to-right" evidence="2">
        <dbReference type="Rhea" id="RHEA:41765"/>
    </physiologicalReaction>
</comment>
<comment type="catalytic activity">
    <reaction evidence="2">
        <text>a ganglioside GD1a (d18:1(4E)) + CMP-N-acetyl-beta-neuraminate = a ganglioside GT1a (d18:1(4E)) + CMP + H(+)</text>
        <dbReference type="Rhea" id="RHEA:41768"/>
        <dbReference type="ChEBI" id="CHEBI:15378"/>
        <dbReference type="ChEBI" id="CHEBI:57812"/>
        <dbReference type="ChEBI" id="CHEBI:60377"/>
        <dbReference type="ChEBI" id="CHEBI:78445"/>
        <dbReference type="ChEBI" id="CHEBI:78447"/>
    </reaction>
    <physiologicalReaction direction="left-to-right" evidence="2">
        <dbReference type="Rhea" id="RHEA:41769"/>
    </physiologicalReaction>
</comment>
<comment type="catalytic activity">
    <reaction evidence="2">
        <text>a ganglioside GT1b (d18:1(4E)) + CMP-N-acetyl-beta-neuraminate = a ganglioside GQ1b (d18:1(4E)) + CMP + H(+)</text>
        <dbReference type="Rhea" id="RHEA:41772"/>
        <dbReference type="ChEBI" id="CHEBI:15378"/>
        <dbReference type="ChEBI" id="CHEBI:57812"/>
        <dbReference type="ChEBI" id="CHEBI:60377"/>
        <dbReference type="ChEBI" id="CHEBI:78452"/>
        <dbReference type="ChEBI" id="CHEBI:78455"/>
    </reaction>
    <physiologicalReaction direction="left-to-right" evidence="2">
        <dbReference type="Rhea" id="RHEA:41773"/>
    </physiologicalReaction>
</comment>
<comment type="catalytic activity">
    <reaction evidence="2">
        <text>a ganglioside GM1b (d18:1(4E)) + CMP-N-acetyl-beta-neuraminate = a ganglioside GD1c (d18:1(4E)) + CMP + H(+)</text>
        <dbReference type="Rhea" id="RHEA:47576"/>
        <dbReference type="ChEBI" id="CHEBI:15378"/>
        <dbReference type="ChEBI" id="CHEBI:57812"/>
        <dbReference type="ChEBI" id="CHEBI:60377"/>
        <dbReference type="ChEBI" id="CHEBI:78568"/>
        <dbReference type="ChEBI" id="CHEBI:87787"/>
    </reaction>
    <physiologicalReaction direction="left-to-right" evidence="2">
        <dbReference type="Rhea" id="RHEA:47577"/>
    </physiologicalReaction>
</comment>
<comment type="catalytic activity">
    <reaction evidence="2">
        <text>a ganglioside GD3 + CMP-N-acetyl-beta-neuraminate = a ganglioside GT3 + CMP + H(+)</text>
        <dbReference type="Rhea" id="RHEA:77295"/>
        <dbReference type="ChEBI" id="CHEBI:15378"/>
        <dbReference type="ChEBI" id="CHEBI:57812"/>
        <dbReference type="ChEBI" id="CHEBI:60377"/>
        <dbReference type="ChEBI" id="CHEBI:79214"/>
        <dbReference type="ChEBI" id="CHEBI:79216"/>
    </reaction>
    <physiologicalReaction direction="left-to-right" evidence="2">
        <dbReference type="Rhea" id="RHEA:77296"/>
    </physiologicalReaction>
</comment>
<comment type="catalytic activity">
    <reaction evidence="2">
        <text>[alpha-N-acetylneuraminyl-(2-&gt;8)](n)-alpha-N-acetylneuraminyl-(2-&gt;8)-alpha-N-acetylneuraminyl-(2-&gt;3)-beta-D-galactosyl-(1-&gt;4)-beta-D-glucosyl-(1&lt;-&gt;1)-ceramide + CMP-N-acetyl-beta-neuraminate = [alpha-N-acetylneuraminyl-(2-&gt;8)](n+1)-alpha-N-acetylneuraminyl-(2-&gt;8)-alpha-N-acetylneuraminyl-(2-&gt;3)-beta-D-galactosyl-(1-&gt;4)-beta-D-glucosyl-(1&lt;-&gt;1)-ceramide + CMP + H(+)</text>
        <dbReference type="Rhea" id="RHEA:77371"/>
        <dbReference type="Rhea" id="RHEA-COMP:18881"/>
        <dbReference type="Rhea" id="RHEA-COMP:18935"/>
        <dbReference type="ChEBI" id="CHEBI:15378"/>
        <dbReference type="ChEBI" id="CHEBI:57812"/>
        <dbReference type="ChEBI" id="CHEBI:60377"/>
        <dbReference type="ChEBI" id="CHEBI:197322"/>
    </reaction>
    <physiologicalReaction direction="left-to-right" evidence="2">
        <dbReference type="Rhea" id="RHEA:77372"/>
    </physiologicalReaction>
</comment>
<comment type="pathway">
    <text>Protein modification; protein glycosylation.</text>
</comment>
<comment type="pathway">
    <text>Lipid metabolism; sphingolipid metabolism.</text>
</comment>
<comment type="subcellular location">
    <subcellularLocation>
        <location evidence="4">Golgi apparatus membrane</location>
        <topology evidence="4">Single-pass type II membrane protein</topology>
    </subcellularLocation>
</comment>
<comment type="similarity">
    <text evidence="4">Belongs to the glycosyltransferase 29 family.</text>
</comment>
<accession>P61642</accession>
<dbReference type="EC" id="2.4.3.8" evidence="2"/>
<dbReference type="EMBL" id="AJ697658">
    <property type="protein sequence ID" value="CAG26896.1"/>
    <property type="molecule type" value="mRNA"/>
</dbReference>
<dbReference type="RefSeq" id="NP_001032380.1">
    <property type="nucleotide sequence ID" value="NM_001037303.1"/>
</dbReference>
<dbReference type="SMR" id="P61642"/>
<dbReference type="STRING" id="9598.ENSPTRP00000090869"/>
<dbReference type="CAZy" id="GT29">
    <property type="family name" value="Glycosyltransferase Family 29"/>
</dbReference>
<dbReference type="GlyCosmos" id="P61642">
    <property type="glycosylation" value="4 sites, No reported glycans"/>
</dbReference>
<dbReference type="PaxDb" id="9598-ENSPTRP00000008136"/>
<dbReference type="GeneID" id="465341"/>
<dbReference type="KEGG" id="ptr:465341"/>
<dbReference type="CTD" id="6489"/>
<dbReference type="eggNOG" id="KOG2692">
    <property type="taxonomic scope" value="Eukaryota"/>
</dbReference>
<dbReference type="InParanoid" id="P61642"/>
<dbReference type="OrthoDB" id="345at9604"/>
<dbReference type="UniPathway" id="UPA00222"/>
<dbReference type="UniPathway" id="UPA00378"/>
<dbReference type="Proteomes" id="UP000002277">
    <property type="component" value="Unplaced"/>
</dbReference>
<dbReference type="GO" id="GO:0000139">
    <property type="term" value="C:Golgi membrane"/>
    <property type="evidence" value="ECO:0007669"/>
    <property type="project" value="UniProtKB-SubCell"/>
</dbReference>
<dbReference type="GO" id="GO:0003828">
    <property type="term" value="F:alpha-N-acetylneuraminate alpha-2,8-sialyltransferase activity"/>
    <property type="evidence" value="ECO:0000250"/>
    <property type="project" value="UniProtKB"/>
</dbReference>
<dbReference type="GO" id="GO:0006491">
    <property type="term" value="P:N-glycan processing"/>
    <property type="evidence" value="ECO:0000318"/>
    <property type="project" value="GO_Central"/>
</dbReference>
<dbReference type="GO" id="GO:0009311">
    <property type="term" value="P:oligosaccharide metabolic process"/>
    <property type="evidence" value="ECO:0000318"/>
    <property type="project" value="GO_Central"/>
</dbReference>
<dbReference type="GO" id="GO:0006486">
    <property type="term" value="P:protein glycosylation"/>
    <property type="evidence" value="ECO:0000318"/>
    <property type="project" value="GO_Central"/>
</dbReference>
<dbReference type="GO" id="GO:0006665">
    <property type="term" value="P:sphingolipid metabolic process"/>
    <property type="evidence" value="ECO:0007669"/>
    <property type="project" value="UniProtKB-UniPathway"/>
</dbReference>
<dbReference type="CDD" id="cd23989">
    <property type="entry name" value="GT29_ST8SIA1"/>
    <property type="match status" value="1"/>
</dbReference>
<dbReference type="FunFam" id="3.90.1480.20:FF:000014">
    <property type="entry name" value="Alpha-N-acetylneuraminide alpha-2,8-sialyltransferase"/>
    <property type="match status" value="1"/>
</dbReference>
<dbReference type="Gene3D" id="3.90.1480.20">
    <property type="entry name" value="Glycosyl transferase family 29"/>
    <property type="match status" value="1"/>
</dbReference>
<dbReference type="InterPro" id="IPR001675">
    <property type="entry name" value="Glyco_trans_29"/>
</dbReference>
<dbReference type="InterPro" id="IPR050943">
    <property type="entry name" value="Glycosyltr_29_Sialyltrsf"/>
</dbReference>
<dbReference type="InterPro" id="IPR038578">
    <property type="entry name" value="GT29-like_sf"/>
</dbReference>
<dbReference type="InterPro" id="IPR012163">
    <property type="entry name" value="Sialyl_trans"/>
</dbReference>
<dbReference type="PANTHER" id="PTHR11987">
    <property type="entry name" value="ALPHA-2,8-SIALYLTRANSFERASE"/>
    <property type="match status" value="1"/>
</dbReference>
<dbReference type="PANTHER" id="PTHR11987:SF3">
    <property type="entry name" value="ALPHA-N-ACETYLNEURAMINIDE ALPHA-2,8-SIALYLTRANSFERASE"/>
    <property type="match status" value="1"/>
</dbReference>
<dbReference type="Pfam" id="PF00777">
    <property type="entry name" value="Glyco_transf_29"/>
    <property type="match status" value="1"/>
</dbReference>
<dbReference type="PIRSF" id="PIRSF005557">
    <property type="entry name" value="Sialyl_trans"/>
    <property type="match status" value="1"/>
</dbReference>
<evidence type="ECO:0000250" key="1">
    <source>
        <dbReference type="UniProtKB" id="O43173"/>
    </source>
</evidence>
<evidence type="ECO:0000250" key="2">
    <source>
        <dbReference type="UniProtKB" id="Q92185"/>
    </source>
</evidence>
<evidence type="ECO:0000255" key="3"/>
<evidence type="ECO:0000305" key="4"/>
<keyword id="KW-1015">Disulfide bond</keyword>
<keyword id="KW-0325">Glycoprotein</keyword>
<keyword id="KW-0328">Glycosyltransferase</keyword>
<keyword id="KW-0333">Golgi apparatus</keyword>
<keyword id="KW-0444">Lipid biosynthesis</keyword>
<keyword id="KW-0443">Lipid metabolism</keyword>
<keyword id="KW-0472">Membrane</keyword>
<keyword id="KW-1185">Reference proteome</keyword>
<keyword id="KW-0735">Signal-anchor</keyword>
<keyword id="KW-0746">Sphingolipid metabolism</keyword>
<keyword id="KW-0808">Transferase</keyword>
<keyword id="KW-0812">Transmembrane</keyword>
<keyword id="KW-1133">Transmembrane helix</keyword>